<dbReference type="EC" id="5.5.1.6"/>
<dbReference type="EMBL" id="AB073787">
    <property type="protein sequence ID" value="BAC54038.1"/>
    <property type="molecule type" value="mRNA"/>
</dbReference>
<dbReference type="SMR" id="Q8H0F6"/>
<dbReference type="ProMEX" id="Q8H0F6"/>
<dbReference type="OMA" id="NCVAHLK"/>
<dbReference type="OrthoDB" id="1903537at2759"/>
<dbReference type="BioCyc" id="MetaCyc:MONOMER-4762"/>
<dbReference type="UniPathway" id="UPA00154"/>
<dbReference type="GO" id="GO:0045430">
    <property type="term" value="F:chalcone isomerase activity"/>
    <property type="evidence" value="ECO:0007669"/>
    <property type="project" value="UniProtKB-EC"/>
</dbReference>
<dbReference type="GO" id="GO:0009813">
    <property type="term" value="P:flavonoid biosynthetic process"/>
    <property type="evidence" value="ECO:0007669"/>
    <property type="project" value="UniProtKB-UniPathway"/>
</dbReference>
<dbReference type="Gene3D" id="1.10.890.20">
    <property type="match status" value="1"/>
</dbReference>
<dbReference type="Gene3D" id="3.50.70.10">
    <property type="match status" value="1"/>
</dbReference>
<dbReference type="InterPro" id="IPR044164">
    <property type="entry name" value="CFI"/>
</dbReference>
<dbReference type="InterPro" id="IPR016087">
    <property type="entry name" value="Chalcone_isomerase"/>
</dbReference>
<dbReference type="InterPro" id="IPR016088">
    <property type="entry name" value="Chalcone_isomerase_3-sand"/>
</dbReference>
<dbReference type="InterPro" id="IPR016089">
    <property type="entry name" value="Chalcone_isomerase_bundle_sf"/>
</dbReference>
<dbReference type="InterPro" id="IPR036298">
    <property type="entry name" value="Chalcone_isomerase_sf"/>
</dbReference>
<dbReference type="PANTHER" id="PTHR28039:SF10">
    <property type="entry name" value="CHALCONE--FLAVANONE ISOMERASE 1A"/>
    <property type="match status" value="1"/>
</dbReference>
<dbReference type="PANTHER" id="PTHR28039">
    <property type="entry name" value="CHALCONE--FLAVONONE ISOMERASE 1-RELATED"/>
    <property type="match status" value="1"/>
</dbReference>
<dbReference type="Pfam" id="PF02431">
    <property type="entry name" value="Chalcone"/>
    <property type="match status" value="1"/>
</dbReference>
<dbReference type="SUPFAM" id="SSF54626">
    <property type="entry name" value="Chalcone isomerase"/>
    <property type="match status" value="1"/>
</dbReference>
<proteinExistence type="evidence at transcript level"/>
<sequence>MAPVKGPLTPIQVENLQFPASITSPATAKSYFLGGAGERGLTIEGKFIKFTGLGVYLEDKTVDSLATKWKGKSSQELLDSLDFYRDIISSPSEKLIRGSKLRPLSGVEYSRKVMENCVAHMKSTGTYGEAEAAAIGKFAEAFRNLDFPPGSSVFYRQSPDGELGLSFSPDDTLPEKEAVVIENKALSEAVLETMIGEHAVSPDLKRCLAERLPAVLNQGLLLSGN</sequence>
<feature type="chain" id="PRO_0000300844" description="Chalcone--flavanone isomerase 3">
    <location>
        <begin position="1"/>
        <end position="225"/>
    </location>
</feature>
<feature type="binding site" evidence="1">
    <location>
        <position position="51"/>
    </location>
    <ligand>
        <name>substrate</name>
    </ligand>
</feature>
<feature type="binding site" evidence="1">
    <location>
        <position position="116"/>
    </location>
    <ligand>
        <name>substrate</name>
    </ligand>
</feature>
<feature type="binding site" evidence="1">
    <location>
        <position position="193"/>
    </location>
    <ligand>
        <name>substrate</name>
    </ligand>
</feature>
<feature type="site" description="Important for catalytic activity" evidence="1">
    <location>
        <position position="109"/>
    </location>
</feature>
<evidence type="ECO:0000250" key="1"/>
<evidence type="ECO:0000269" key="2">
    <source>
    </source>
</evidence>
<evidence type="ECO:0000305" key="3"/>
<gene>
    <name type="primary">CHI3</name>
</gene>
<reference key="1">
    <citation type="journal article" date="2003" name="Plant Physiol.">
        <title>A cluster of genes encodes the two types of chalcone isomerase involved in the biosynthesis of general flavonoids and legume-specific 5-deoxy(iso)flavonoids in Lotus japonicus.</title>
        <authorList>
            <person name="Shimada N."/>
            <person name="Aoki T."/>
            <person name="Sato S."/>
            <person name="Nakamura Y."/>
            <person name="Tabata S."/>
            <person name="Ayabe S."/>
        </authorList>
    </citation>
    <scope>NUCLEOTIDE SEQUENCE [MRNA]</scope>
    <scope>FUNCTION</scope>
    <source>
        <strain>cv. Gifu / B-129</strain>
        <tissue>Root</tissue>
    </source>
</reference>
<organism>
    <name type="scientific">Lotus japonicus</name>
    <name type="common">Lotus corniculatus var. japonicus</name>
    <dbReference type="NCBI Taxonomy" id="34305"/>
    <lineage>
        <taxon>Eukaryota</taxon>
        <taxon>Viridiplantae</taxon>
        <taxon>Streptophyta</taxon>
        <taxon>Embryophyta</taxon>
        <taxon>Tracheophyta</taxon>
        <taxon>Spermatophyta</taxon>
        <taxon>Magnoliopsida</taxon>
        <taxon>eudicotyledons</taxon>
        <taxon>Gunneridae</taxon>
        <taxon>Pentapetalae</taxon>
        <taxon>rosids</taxon>
        <taxon>fabids</taxon>
        <taxon>Fabales</taxon>
        <taxon>Fabaceae</taxon>
        <taxon>Papilionoideae</taxon>
        <taxon>50 kb inversion clade</taxon>
        <taxon>NPAAA clade</taxon>
        <taxon>Hologalegina</taxon>
        <taxon>robinioid clade</taxon>
        <taxon>Loteae</taxon>
        <taxon>Lotus</taxon>
    </lineage>
</organism>
<keyword id="KW-0284">Flavonoid biosynthesis</keyword>
<keyword id="KW-0413">Isomerase</keyword>
<name>CFI3_LOTJA</name>
<comment type="function">
    <text evidence="2">Catalyzes the intramolecular cyclization of bicyclic chalcones into tricyclic (S)-flavanones. Responsible for the isomerization of 4,2',4',6'-tetrahydroxychalcone (also termed chalcone) into naringenin.</text>
</comment>
<comment type="catalytic activity">
    <reaction>
        <text>a chalcone = a flavanone.</text>
        <dbReference type="EC" id="5.5.1.6"/>
    </reaction>
</comment>
<comment type="pathway">
    <text>Secondary metabolite biosynthesis; flavonoid biosynthesis.</text>
</comment>
<comment type="miscellaneous">
    <text>Part of the biosynthetic pathway for all classes of flavonoids, a large class of secondary plant metabolites, many of which are brightly colored.</text>
</comment>
<comment type="similarity">
    <text evidence="3">Belongs to the chalcone isomerase family.</text>
</comment>
<accession>Q8H0F6</accession>
<protein>
    <recommendedName>
        <fullName>Chalcone--flavanone isomerase 3</fullName>
        <shortName>Chalcone isomerase 3</shortName>
        <ecNumber>5.5.1.6</ecNumber>
    </recommendedName>
</protein>